<accession>B2RHG2</accession>
<accession>C6KXN1</accession>
<dbReference type="EMBL" id="AP009380">
    <property type="protein sequence ID" value="BAG32807.1"/>
    <property type="molecule type" value="Genomic_DNA"/>
</dbReference>
<dbReference type="EMBL" id="AB360435">
    <property type="protein sequence ID" value="BAH90730.1"/>
    <property type="molecule type" value="Genomic_DNA"/>
</dbReference>
<dbReference type="PDB" id="5NFI">
    <property type="method" value="X-ray"/>
    <property type="resolution" value="2.51 A"/>
    <property type="chains" value="B=40-320"/>
</dbReference>
<dbReference type="PDBsum" id="5NFI"/>
<dbReference type="SMR" id="B2RHG2"/>
<dbReference type="KEGG" id="pgn:PGN_0288"/>
<dbReference type="eggNOG" id="ENOG5033NRG">
    <property type="taxonomic scope" value="Bacteria"/>
</dbReference>
<dbReference type="HOGENOM" id="CLU_862377_0_0_10"/>
<dbReference type="OrthoDB" id="1013388at2"/>
<dbReference type="BioCyc" id="PGIN431947:G1G2V-315-MONOMER"/>
<dbReference type="Proteomes" id="UP000008842">
    <property type="component" value="Chromosome"/>
</dbReference>
<dbReference type="GO" id="GO:0009279">
    <property type="term" value="C:cell outer membrane"/>
    <property type="evidence" value="ECO:0000314"/>
    <property type="project" value="UniProtKB"/>
</dbReference>
<dbReference type="GO" id="GO:0009297">
    <property type="term" value="P:pilus assembly"/>
    <property type="evidence" value="ECO:0000315"/>
    <property type="project" value="UniProtKB"/>
</dbReference>
<dbReference type="Gene3D" id="2.60.40.2090">
    <property type="match status" value="1"/>
</dbReference>
<dbReference type="Gene3D" id="2.60.40.2100">
    <property type="match status" value="1"/>
</dbReference>
<dbReference type="InterPro" id="IPR014941">
    <property type="entry name" value="FimB/Mfa2/Mfa3"/>
</dbReference>
<dbReference type="Pfam" id="PF08842">
    <property type="entry name" value="Mfa2"/>
    <property type="match status" value="1"/>
</dbReference>
<dbReference type="PROSITE" id="PS51257">
    <property type="entry name" value="PROKAR_LIPOPROTEIN"/>
    <property type="match status" value="1"/>
</dbReference>
<reference evidence="10 11" key="1">
    <citation type="journal article" date="2008" name="DNA Res.">
        <title>Determination of the genome sequence of Porphyromonas gingivalis strain ATCC 33277 and genomic comparison with strain W83 revealed extensive genome rearrangements in P. gingivalis.</title>
        <authorList>
            <person name="Naito M."/>
            <person name="Hirakawa H."/>
            <person name="Yamashita A."/>
            <person name="Ohara N."/>
            <person name="Shoji M."/>
            <person name="Yukitake H."/>
            <person name="Nakayama K."/>
            <person name="Toh H."/>
            <person name="Yoshimura F."/>
            <person name="Kuhara S."/>
            <person name="Hattori M."/>
            <person name="Hayashi T."/>
            <person name="Nakayama K."/>
        </authorList>
    </citation>
    <scope>NUCLEOTIDE SEQUENCE [LARGE SCALE GENOMIC DNA]</scope>
    <source>
        <strain evidence="11">ATCC 33277 / DSM 20709 / CIP 103683 / JCM 12257 / NCTC 11834 / 2561</strain>
    </source>
</reference>
<reference key="2">
    <citation type="journal article" date="2009" name="Microbiology">
        <title>Anchoring and length regulation of Porphyromonas gingivalis Mfa1 fimbriae by the downstream gene product Mfa2.</title>
        <authorList>
            <person name="Hasegawa Y."/>
            <person name="Iwami J."/>
            <person name="Sato K."/>
            <person name="Park Y."/>
            <person name="Nishikawa K."/>
            <person name="Atsumi T."/>
            <person name="Moriguchi K."/>
            <person name="Murakami Y."/>
            <person name="Lamont R.J."/>
            <person name="Nakamura H."/>
            <person name="Ohno N."/>
            <person name="Yoshimura F."/>
        </authorList>
    </citation>
    <scope>NUCLEOTIDE SEQUENCE [GENOMIC DNA]</scope>
    <scope>FUNCTION</scope>
    <scope>SUBUNIT</scope>
    <scope>SUBCELLULAR LOCATION</scope>
    <scope>INTERACTION WITH MFA1</scope>
    <scope>DISRUPTION PHENOTYPE</scope>
    <source>
        <strain evidence="5">ATCC 33277 / DSM 20709 / CIP 103683 / JCM 12257 / NCTC 11834 / 2561</strain>
    </source>
</reference>
<reference key="3">
    <citation type="journal article" date="2015" name="PLoS ONE">
        <title>Mfa4, an accessory protein of Mfa1 fimbriae, modulates fimbrial biogenesis, cell auto-aggregation, and biofilm formation in Porphyromonas gingivalis.</title>
        <authorList>
            <person name="Ikai R."/>
            <person name="Hasegawa Y."/>
            <person name="Izumigawa M."/>
            <person name="Nagano K."/>
            <person name="Yoshida Y."/>
            <person name="Kitai N."/>
            <person name="Lamont R.J."/>
            <person name="Yoshimura F."/>
            <person name="Murakami Y."/>
        </authorList>
    </citation>
    <scope>SUBCELLULAR LOCATION</scope>
    <source>
        <strain evidence="6">ATCC 33277 / DSM 20709 / CIP 103683 / JCM 12257 / NCTC 11834 / 2561</strain>
    </source>
</reference>
<reference key="4">
    <citation type="journal article" date="2016" name="Cell">
        <title>A distinct type of pilus from the human microbiome.</title>
        <authorList>
            <person name="Xu Q."/>
            <person name="Shoji M."/>
            <person name="Shibata S."/>
            <person name="Naito M."/>
            <person name="Sato K."/>
            <person name="Elsliger M.A."/>
            <person name="Grant J.C."/>
            <person name="Axelrod H.L."/>
            <person name="Chiu H.J."/>
            <person name="Farr C.L."/>
            <person name="Jaroszewski L."/>
            <person name="Knuth M.W."/>
            <person name="Deacon A.M."/>
            <person name="Godzik A."/>
            <person name="Lesley S.A."/>
            <person name="Curtis M.A."/>
            <person name="Nakayama K."/>
            <person name="Wilson I.A."/>
        </authorList>
    </citation>
    <scope>SUBCELLULAR LOCATION</scope>
    <scope>PALMITOYLATION AT CYS-29</scope>
    <scope>MUTAGENESIS OF CYS-29</scope>
    <scope>LACK OF A CLEAVABLE PROPEPTIDE</scope>
    <source>
        <strain evidence="7">ATCC 33277 / DSM 20709 / CIP 103683 / JCM 12257 / NCTC 11834 / 2561</strain>
    </source>
</reference>
<sequence>MNKRKHMDIRRLIISLPAIMALWGGLASCDKMIYDNYDDCPRGVYVNFYSQTECAENPSYPAEVARLNVYAFDKDGILRSANVFEDVQLSAAKEWLIPLEKDGLYTIFAWGNIDDHYNIGEIKIGETTKQQVLMRLKQDGKWATNIDGTTLWYATSPVVELKNMEDGADQYIHTRANLREYTNRVTVSVDSLPHPENYEIKLASSNGSYRFDGTVAKADSTYYPGETKVVGDSTCRAFFTTLKLESGHENTLSVTHKPTGREIFRTDLVGAILSSQYAQNINLRCINDFDIRLVAHHCNCPDDTYVVVQIWINGWLIHSYEIEL</sequence>
<protein>
    <recommendedName>
        <fullName evidence="8">Minor fimbrium anchoring subunit Mfa2</fullName>
    </recommendedName>
    <alternativeName>
        <fullName>Minor fimbrial antigen 2</fullName>
    </alternativeName>
</protein>
<feature type="signal peptide" evidence="1">
    <location>
        <begin position="1"/>
        <end position="28"/>
    </location>
</feature>
<feature type="chain" id="PRO_0000436794" description="Minor fimbrium anchoring subunit Mfa2">
    <location>
        <begin position="29"/>
        <end position="324"/>
    </location>
</feature>
<feature type="lipid moiety-binding region" description="N-palmitoyl cysteine" evidence="1 4">
    <location>
        <position position="29"/>
    </location>
</feature>
<feature type="lipid moiety-binding region" description="S-diacylglycerol cysteine" evidence="1">
    <location>
        <position position="29"/>
    </location>
</feature>
<feature type="mutagenesis site" description="Loss of palmitoylation. Abolishes export to the outer membrane." evidence="4">
    <original>C</original>
    <variation>A</variation>
    <location>
        <position position="29"/>
    </location>
</feature>
<feature type="strand" evidence="12">
    <location>
        <begin position="42"/>
        <end position="50"/>
    </location>
</feature>
<feature type="strand" evidence="12">
    <location>
        <begin position="67"/>
        <end position="72"/>
    </location>
</feature>
<feature type="strand" evidence="12">
    <location>
        <begin position="76"/>
        <end position="84"/>
    </location>
</feature>
<feature type="strand" evidence="12">
    <location>
        <begin position="95"/>
        <end position="99"/>
    </location>
</feature>
<feature type="strand" evidence="12">
    <location>
        <begin position="103"/>
        <end position="111"/>
    </location>
</feature>
<feature type="strand" evidence="12">
    <location>
        <begin position="117"/>
        <end position="119"/>
    </location>
</feature>
<feature type="turn" evidence="12">
    <location>
        <begin position="124"/>
        <end position="126"/>
    </location>
</feature>
<feature type="strand" evidence="12">
    <location>
        <begin position="131"/>
        <end position="136"/>
    </location>
</feature>
<feature type="strand" evidence="12">
    <location>
        <begin position="152"/>
        <end position="155"/>
    </location>
</feature>
<feature type="strand" evidence="12">
    <location>
        <begin position="159"/>
        <end position="161"/>
    </location>
</feature>
<feature type="strand" evidence="12">
    <location>
        <begin position="170"/>
        <end position="177"/>
    </location>
</feature>
<feature type="strand" evidence="12">
    <location>
        <begin position="183"/>
        <end position="191"/>
    </location>
</feature>
<feature type="helix" evidence="12">
    <location>
        <begin position="195"/>
        <end position="197"/>
    </location>
</feature>
<feature type="strand" evidence="12">
    <location>
        <begin position="198"/>
        <end position="205"/>
    </location>
</feature>
<feature type="strand" evidence="12">
    <location>
        <begin position="207"/>
        <end position="213"/>
    </location>
</feature>
<feature type="strand" evidence="12">
    <location>
        <begin position="221"/>
        <end position="223"/>
    </location>
</feature>
<feature type="strand" evidence="12">
    <location>
        <begin position="226"/>
        <end position="229"/>
    </location>
</feature>
<feature type="strand" evidence="12">
    <location>
        <begin position="231"/>
        <end position="233"/>
    </location>
</feature>
<feature type="strand" evidence="12">
    <location>
        <begin position="235"/>
        <end position="242"/>
    </location>
</feature>
<feature type="strand" evidence="12">
    <location>
        <begin position="246"/>
        <end position="248"/>
    </location>
</feature>
<feature type="strand" evidence="12">
    <location>
        <begin position="250"/>
        <end position="256"/>
    </location>
</feature>
<feature type="turn" evidence="12">
    <location>
        <begin position="257"/>
        <end position="260"/>
    </location>
</feature>
<feature type="strand" evidence="12">
    <location>
        <begin position="261"/>
        <end position="267"/>
    </location>
</feature>
<feature type="helix" evidence="12">
    <location>
        <begin position="268"/>
        <end position="272"/>
    </location>
</feature>
<feature type="turn" evidence="12">
    <location>
        <begin position="283"/>
        <end position="285"/>
    </location>
</feature>
<feature type="strand" evidence="12">
    <location>
        <begin position="288"/>
        <end position="297"/>
    </location>
</feature>
<feature type="strand" evidence="12">
    <location>
        <begin position="305"/>
        <end position="312"/>
    </location>
</feature>
<feature type="strand" evidence="12">
    <location>
        <begin position="315"/>
        <end position="319"/>
    </location>
</feature>
<organism>
    <name type="scientific">Porphyromonas gingivalis (strain ATCC 33277 / DSM 20709 / CIP 103683 / JCM 12257 / NCTC 11834 / 2561)</name>
    <dbReference type="NCBI Taxonomy" id="431947"/>
    <lineage>
        <taxon>Bacteria</taxon>
        <taxon>Pseudomonadati</taxon>
        <taxon>Bacteroidota</taxon>
        <taxon>Bacteroidia</taxon>
        <taxon>Bacteroidales</taxon>
        <taxon>Porphyromonadaceae</taxon>
        <taxon>Porphyromonas</taxon>
    </lineage>
</organism>
<gene>
    <name type="primary">mfa2</name>
    <name evidence="10" type="ordered locus">PGN_0288</name>
</gene>
<name>MFA2_PORG3</name>
<keyword id="KW-0002">3D-structure</keyword>
<keyword id="KW-0998">Cell outer membrane</keyword>
<keyword id="KW-0449">Lipoprotein</keyword>
<keyword id="KW-0472">Membrane</keyword>
<keyword id="KW-0564">Palmitate</keyword>
<keyword id="KW-0732">Signal</keyword>
<keyword id="KW-0843">Virulence</keyword>
<proteinExistence type="evidence at protein level"/>
<comment type="function">
    <text evidence="2 8">Anchoring subunit of the minor fimbriae. Regulates fimbrial length (PubMed:19589838). These filamentous pili are attached to the cell surface; they mediate biofilm formation, adhesion onto host cells and onto other bacteria that are part of the oral microbiome. Fimbriae of P.gingivalis are major virulence factors (Probable).</text>
</comment>
<comment type="subunit">
    <text evidence="2 9">Mfa2 is not part of the fimbrium itself, but anchors the fimbrium in the outer membrane via its interaction with Mfa1 (PubMed:19589838). Linear, head-to-tail oligomerization of fimbrial subunits mediates assembly of the fimbrium stalk, while the minor components Mfa3, Mfa4 and Mfa5 probably form the fimbrium tip (PubMed:27062925). The anchoring subunit Mfa2 limits fimbrium length and is important for solid fimbrium attachment to the outer membrane. In its absence, the minor fimbriae become very long and are easily detached from the membrane (PubMed:19589838).</text>
</comment>
<comment type="subcellular location">
    <subcellularLocation>
        <location evidence="2 3 4">Cell outer membrane</location>
        <topology evidence="9">Lipid-anchor</topology>
    </subcellularLocation>
</comment>
<comment type="PTM">
    <text evidence="4">Palmitoylated. Palmitoylation is important for export to the outer membrane.</text>
</comment>
<comment type="PTM">
    <text evidence="4">Unlike other fimbrial subunits, does not contain a propeptide that is cleaved by gingipain.</text>
</comment>
<comment type="disruption phenotype">
    <text evidence="2">Minor fimbriae are longer than normal and are easily detached from the cell by mild shear stress.</text>
</comment>
<comment type="miscellaneous">
    <text evidence="8">The name (minor fimbrium subunit) does not indicate the abundance of the protein, but is derived from the greater length of the major fimbriae. In strain ATCC 33277 and strain ATCC BAA-1703 / FDC 381, major fimbriae are 300 - 1600 nM in length and about 5 nm in diameter. In contrast, minor fimbriae are only about 80 - 120 nm long. This length difference is observed only in a small number of strains, including strain ATCC 33277 and strain ATCC BAA-1703 / FDC 381, and is due to a loss of function mutation in FimB, a protein that restricts fimbrial length in other strains.</text>
</comment>
<comment type="similarity">
    <text evidence="8">Belongs to the bacteroidetes fimbrillin superfamily. FimB/Mfa2 family.</text>
</comment>
<evidence type="ECO:0000255" key="1">
    <source>
        <dbReference type="PROSITE-ProRule" id="PRU00303"/>
    </source>
</evidence>
<evidence type="ECO:0000269" key="2">
    <source>
    </source>
</evidence>
<evidence type="ECO:0000269" key="3">
    <source>
    </source>
</evidence>
<evidence type="ECO:0000269" key="4">
    <source>
    </source>
</evidence>
<evidence type="ECO:0000303" key="5">
    <source>
    </source>
</evidence>
<evidence type="ECO:0000303" key="6">
    <source>
    </source>
</evidence>
<evidence type="ECO:0000303" key="7">
    <source>
    </source>
</evidence>
<evidence type="ECO:0000305" key="8"/>
<evidence type="ECO:0000305" key="9">
    <source>
    </source>
</evidence>
<evidence type="ECO:0000312" key="10">
    <source>
        <dbReference type="EMBL" id="BAG32807.1"/>
    </source>
</evidence>
<evidence type="ECO:0000312" key="11">
    <source>
        <dbReference type="Proteomes" id="UP000008842"/>
    </source>
</evidence>
<evidence type="ECO:0007829" key="12">
    <source>
        <dbReference type="PDB" id="5NFI"/>
    </source>
</evidence>